<keyword id="KW-0249">Electron transport</keyword>
<keyword id="KW-0472">Membrane</keyword>
<keyword id="KW-0496">Mitochondrion</keyword>
<keyword id="KW-0999">Mitochondrion inner membrane</keyword>
<keyword id="KW-0520">NAD</keyword>
<keyword id="KW-0679">Respiratory chain</keyword>
<keyword id="KW-1278">Translocase</keyword>
<keyword id="KW-0812">Transmembrane</keyword>
<keyword id="KW-1133">Transmembrane helix</keyword>
<keyword id="KW-0813">Transport</keyword>
<keyword id="KW-0830">Ubiquinone</keyword>
<name>NU2M_GARCR</name>
<protein>
    <recommendedName>
        <fullName evidence="1">NADH-ubiquinone oxidoreductase chain 2</fullName>
        <ecNumber evidence="1">7.1.1.2</ecNumber>
    </recommendedName>
    <alternativeName>
        <fullName>NADH dehydrogenase subunit 2</fullName>
    </alternativeName>
</protein>
<organism>
    <name type="scientific">Gardnerycteris crenulata</name>
    <name type="common">Striped hairy-nosed bat</name>
    <name type="synonym">Mimon crenulatum</name>
    <dbReference type="NCBI Taxonomy" id="148071"/>
    <lineage>
        <taxon>Eukaryota</taxon>
        <taxon>Metazoa</taxon>
        <taxon>Chordata</taxon>
        <taxon>Craniata</taxon>
        <taxon>Vertebrata</taxon>
        <taxon>Euteleostomi</taxon>
        <taxon>Mammalia</taxon>
        <taxon>Eutheria</taxon>
        <taxon>Laurasiatheria</taxon>
        <taxon>Chiroptera</taxon>
        <taxon>Yangochiroptera</taxon>
        <taxon>Phyllostomidae</taxon>
        <taxon>Phyllostominae</taxon>
        <taxon>Gardnerycteris</taxon>
    </lineage>
</organism>
<gene>
    <name evidence="1" type="primary">MT-ND2</name>
    <name type="synonym">MTND2</name>
    <name type="synonym">NADH2</name>
    <name type="synonym">ND2</name>
</gene>
<sequence length="347" mass="39036">MNPIIFFMIMLTIILGTTIVMTSSHWLTVWMGFEMNMLAIIPMLMKNHHPRSTEAATKYFLTQATASMLLLLAITINLMSSGQWTVTNMINPTSSIILTIALAMKLGLAPFHFWVPEVTQGTPLSSGLILLTWQKLAPLSILLTMSPIINLDLLLMMGLLSVMIGGWGGLNQTQLRKIMAYSSIAHMGWMVTILIYNPTLTMLNLTIYIMMTLTMFMLLITTSTTTTLSLSHAWNKMPLITTMMLTTLLSMGGLPPLTGFMPKWMILQELTKNNSIILPTFMAITALLNLYFYMRLTYSTSLTMFPTTNATKIKWPFMTTKQMTYLSPLMVISTMTLPLTPMMMILH</sequence>
<dbReference type="EC" id="7.1.1.2" evidence="1"/>
<dbReference type="EMBL" id="AY504556">
    <property type="protein sequence ID" value="AAS91421.1"/>
    <property type="molecule type" value="Genomic_DNA"/>
</dbReference>
<dbReference type="SMR" id="Q330D6"/>
<dbReference type="GO" id="GO:0005743">
    <property type="term" value="C:mitochondrial inner membrane"/>
    <property type="evidence" value="ECO:0000250"/>
    <property type="project" value="UniProtKB"/>
</dbReference>
<dbReference type="GO" id="GO:0008137">
    <property type="term" value="F:NADH dehydrogenase (ubiquinone) activity"/>
    <property type="evidence" value="ECO:0000250"/>
    <property type="project" value="UniProtKB"/>
</dbReference>
<dbReference type="GO" id="GO:0006120">
    <property type="term" value="P:mitochondrial electron transport, NADH to ubiquinone"/>
    <property type="evidence" value="ECO:0000250"/>
    <property type="project" value="UniProtKB"/>
</dbReference>
<dbReference type="GO" id="GO:0032981">
    <property type="term" value="P:mitochondrial respiratory chain complex I assembly"/>
    <property type="evidence" value="ECO:0000250"/>
    <property type="project" value="UniProtKB"/>
</dbReference>
<dbReference type="InterPro" id="IPR050175">
    <property type="entry name" value="Complex_I_Subunit_2"/>
</dbReference>
<dbReference type="InterPro" id="IPR010933">
    <property type="entry name" value="NADH_DH_su2_C"/>
</dbReference>
<dbReference type="InterPro" id="IPR003917">
    <property type="entry name" value="NADH_UbQ_OxRdtase_chain2"/>
</dbReference>
<dbReference type="InterPro" id="IPR001750">
    <property type="entry name" value="ND/Mrp_TM"/>
</dbReference>
<dbReference type="PANTHER" id="PTHR46552">
    <property type="entry name" value="NADH-UBIQUINONE OXIDOREDUCTASE CHAIN 2"/>
    <property type="match status" value="1"/>
</dbReference>
<dbReference type="PANTHER" id="PTHR46552:SF1">
    <property type="entry name" value="NADH-UBIQUINONE OXIDOREDUCTASE CHAIN 2"/>
    <property type="match status" value="1"/>
</dbReference>
<dbReference type="Pfam" id="PF06444">
    <property type="entry name" value="NADH_dehy_S2_C"/>
    <property type="match status" value="1"/>
</dbReference>
<dbReference type="Pfam" id="PF00361">
    <property type="entry name" value="Proton_antipo_M"/>
    <property type="match status" value="1"/>
</dbReference>
<dbReference type="PRINTS" id="PR01436">
    <property type="entry name" value="NADHDHGNASE2"/>
</dbReference>
<evidence type="ECO:0000250" key="1">
    <source>
        <dbReference type="UniProtKB" id="P03891"/>
    </source>
</evidence>
<evidence type="ECO:0000250" key="2">
    <source>
        <dbReference type="UniProtKB" id="P03892"/>
    </source>
</evidence>
<evidence type="ECO:0000255" key="3"/>
<evidence type="ECO:0000305" key="4"/>
<reference key="1">
    <citation type="submission" date="2003-12" db="EMBL/GenBank/DDBJ databases">
        <title>Bats and birds: flying in the face of mtDNA evolutionary rates.</title>
        <authorList>
            <person name="Worthington Wilmer J.M."/>
            <person name="Schneider C.J."/>
            <person name="Sorenson M.D."/>
        </authorList>
    </citation>
    <scope>NUCLEOTIDE SEQUENCE [GENOMIC DNA]</scope>
    <source>
        <strain>Isolate ET1</strain>
    </source>
</reference>
<comment type="function">
    <text evidence="1">Core subunit of the mitochondrial membrane respiratory chain NADH dehydrogenase (Complex I) which catalyzes electron transfer from NADH through the respiratory chain, using ubiquinone as an electron acceptor. Essential for the catalytic activity and assembly of complex I.</text>
</comment>
<comment type="catalytic activity">
    <reaction evidence="1">
        <text>a ubiquinone + NADH + 5 H(+)(in) = a ubiquinol + NAD(+) + 4 H(+)(out)</text>
        <dbReference type="Rhea" id="RHEA:29091"/>
        <dbReference type="Rhea" id="RHEA-COMP:9565"/>
        <dbReference type="Rhea" id="RHEA-COMP:9566"/>
        <dbReference type="ChEBI" id="CHEBI:15378"/>
        <dbReference type="ChEBI" id="CHEBI:16389"/>
        <dbReference type="ChEBI" id="CHEBI:17976"/>
        <dbReference type="ChEBI" id="CHEBI:57540"/>
        <dbReference type="ChEBI" id="CHEBI:57945"/>
        <dbReference type="EC" id="7.1.1.2"/>
    </reaction>
</comment>
<comment type="subunit">
    <text evidence="1 2">Core subunit of respiratory chain NADH dehydrogenase (Complex I) which is composed of 45 different subunits. Interacts with TMEM242 (By similarity).</text>
</comment>
<comment type="subcellular location">
    <subcellularLocation>
        <location evidence="2">Mitochondrion inner membrane</location>
        <topology evidence="3">Multi-pass membrane protein</topology>
    </subcellularLocation>
</comment>
<comment type="similarity">
    <text evidence="4">Belongs to the complex I subunit 2 family.</text>
</comment>
<accession>Q330D6</accession>
<feature type="chain" id="PRO_0000256668" description="NADH-ubiquinone oxidoreductase chain 2">
    <location>
        <begin position="1"/>
        <end position="347"/>
    </location>
</feature>
<feature type="transmembrane region" description="Helical" evidence="3">
    <location>
        <begin position="1"/>
        <end position="21"/>
    </location>
</feature>
<feature type="transmembrane region" description="Helical" evidence="3">
    <location>
        <begin position="25"/>
        <end position="45"/>
    </location>
</feature>
<feature type="transmembrane region" description="Helical" evidence="3">
    <location>
        <begin position="59"/>
        <end position="79"/>
    </location>
</feature>
<feature type="transmembrane region" description="Helical" evidence="3">
    <location>
        <begin position="96"/>
        <end position="116"/>
    </location>
</feature>
<feature type="transmembrane region" description="Helical" evidence="3">
    <location>
        <begin position="148"/>
        <end position="168"/>
    </location>
</feature>
<feature type="transmembrane region" description="Helical" evidence="3">
    <location>
        <begin position="178"/>
        <end position="198"/>
    </location>
</feature>
<feature type="transmembrane region" description="Helical" evidence="3">
    <location>
        <begin position="200"/>
        <end position="220"/>
    </location>
</feature>
<feature type="transmembrane region" description="Helical" evidence="3">
    <location>
        <begin position="237"/>
        <end position="257"/>
    </location>
</feature>
<feature type="transmembrane region" description="Helical" evidence="3">
    <location>
        <begin position="274"/>
        <end position="294"/>
    </location>
</feature>
<feature type="transmembrane region" description="Helical" evidence="3">
    <location>
        <begin position="326"/>
        <end position="346"/>
    </location>
</feature>
<proteinExistence type="inferred from homology"/>
<geneLocation type="mitochondrion"/>